<accession>Q3IK49</accession>
<proteinExistence type="inferred from homology"/>
<sequence>MASGKEIKSKIGSIKNTQKITSAMEMVAASKMKRAQERVATSRPYAAKLRTVIGRVAQANLDFTHPFLEEREVKRVGYIVISTDRGLCGGLNSNEFKKVALDIKAWKEKGVSAEFATLGSKAAGFFQRFGGQVLAKKAGLGDKPSIQDIIGPVKVMLDAFSEGKIDRLFLVYNKFVNTMKQEPTVDQLLPLPKAEEEVSAHTWDYLYEPNPDAILEALLVRFVESQVYQGVVENAASEQAARMVAMKAATDNAGDLMDELQLIYNKARQAAITQEISEICSGSAAV</sequence>
<evidence type="ECO:0000255" key="1">
    <source>
        <dbReference type="HAMAP-Rule" id="MF_00815"/>
    </source>
</evidence>
<reference key="1">
    <citation type="journal article" date="2005" name="Genome Res.">
        <title>Coping with cold: the genome of the versatile marine Antarctica bacterium Pseudoalteromonas haloplanktis TAC125.</title>
        <authorList>
            <person name="Medigue C."/>
            <person name="Krin E."/>
            <person name="Pascal G."/>
            <person name="Barbe V."/>
            <person name="Bernsel A."/>
            <person name="Bertin P.N."/>
            <person name="Cheung F."/>
            <person name="Cruveiller S."/>
            <person name="D'Amico S."/>
            <person name="Duilio A."/>
            <person name="Fang G."/>
            <person name="Feller G."/>
            <person name="Ho C."/>
            <person name="Mangenot S."/>
            <person name="Marino G."/>
            <person name="Nilsson J."/>
            <person name="Parrilli E."/>
            <person name="Rocha E.P.C."/>
            <person name="Rouy Z."/>
            <person name="Sekowska A."/>
            <person name="Tutino M.L."/>
            <person name="Vallenet D."/>
            <person name="von Heijne G."/>
            <person name="Danchin A."/>
        </authorList>
    </citation>
    <scope>NUCLEOTIDE SEQUENCE [LARGE SCALE GENOMIC DNA]</scope>
    <source>
        <strain>TAC 125</strain>
    </source>
</reference>
<gene>
    <name evidence="1" type="primary">atpG</name>
    <name type="ordered locus">PSHAa3009</name>
</gene>
<keyword id="KW-0066">ATP synthesis</keyword>
<keyword id="KW-0997">Cell inner membrane</keyword>
<keyword id="KW-1003">Cell membrane</keyword>
<keyword id="KW-0139">CF(1)</keyword>
<keyword id="KW-0375">Hydrogen ion transport</keyword>
<keyword id="KW-0406">Ion transport</keyword>
<keyword id="KW-0472">Membrane</keyword>
<keyword id="KW-1185">Reference proteome</keyword>
<keyword id="KW-0813">Transport</keyword>
<feature type="chain" id="PRO_1000053293" description="ATP synthase gamma chain">
    <location>
        <begin position="1"/>
        <end position="286"/>
    </location>
</feature>
<organism>
    <name type="scientific">Pseudoalteromonas translucida (strain TAC 125)</name>
    <dbReference type="NCBI Taxonomy" id="326442"/>
    <lineage>
        <taxon>Bacteria</taxon>
        <taxon>Pseudomonadati</taxon>
        <taxon>Pseudomonadota</taxon>
        <taxon>Gammaproteobacteria</taxon>
        <taxon>Alteromonadales</taxon>
        <taxon>Pseudoalteromonadaceae</taxon>
        <taxon>Pseudoalteromonas</taxon>
    </lineage>
</organism>
<name>ATPG_PSET1</name>
<dbReference type="EMBL" id="CR954246">
    <property type="protein sequence ID" value="CAI88038.1"/>
    <property type="molecule type" value="Genomic_DNA"/>
</dbReference>
<dbReference type="SMR" id="Q3IK49"/>
<dbReference type="STRING" id="326442.PSHAa3009"/>
<dbReference type="KEGG" id="pha:PSHAa3009"/>
<dbReference type="eggNOG" id="COG0224">
    <property type="taxonomic scope" value="Bacteria"/>
</dbReference>
<dbReference type="HOGENOM" id="CLU_050669_0_1_6"/>
<dbReference type="BioCyc" id="PHAL326442:PSHA_RS14765-MONOMER"/>
<dbReference type="Proteomes" id="UP000006843">
    <property type="component" value="Chromosome I"/>
</dbReference>
<dbReference type="GO" id="GO:0005886">
    <property type="term" value="C:plasma membrane"/>
    <property type="evidence" value="ECO:0007669"/>
    <property type="project" value="UniProtKB-SubCell"/>
</dbReference>
<dbReference type="GO" id="GO:0045259">
    <property type="term" value="C:proton-transporting ATP synthase complex"/>
    <property type="evidence" value="ECO:0007669"/>
    <property type="project" value="UniProtKB-KW"/>
</dbReference>
<dbReference type="GO" id="GO:0005524">
    <property type="term" value="F:ATP binding"/>
    <property type="evidence" value="ECO:0007669"/>
    <property type="project" value="UniProtKB-UniRule"/>
</dbReference>
<dbReference type="GO" id="GO:0046933">
    <property type="term" value="F:proton-transporting ATP synthase activity, rotational mechanism"/>
    <property type="evidence" value="ECO:0007669"/>
    <property type="project" value="UniProtKB-UniRule"/>
</dbReference>
<dbReference type="GO" id="GO:0042777">
    <property type="term" value="P:proton motive force-driven plasma membrane ATP synthesis"/>
    <property type="evidence" value="ECO:0007669"/>
    <property type="project" value="UniProtKB-UniRule"/>
</dbReference>
<dbReference type="CDD" id="cd12151">
    <property type="entry name" value="F1-ATPase_gamma"/>
    <property type="match status" value="1"/>
</dbReference>
<dbReference type="FunFam" id="1.10.287.80:FF:000005">
    <property type="entry name" value="ATP synthase gamma chain"/>
    <property type="match status" value="1"/>
</dbReference>
<dbReference type="FunFam" id="3.40.1380.10:FF:000006">
    <property type="entry name" value="ATP synthase gamma chain"/>
    <property type="match status" value="1"/>
</dbReference>
<dbReference type="Gene3D" id="3.40.1380.10">
    <property type="match status" value="1"/>
</dbReference>
<dbReference type="Gene3D" id="1.10.287.80">
    <property type="entry name" value="ATP synthase, gamma subunit, helix hairpin domain"/>
    <property type="match status" value="1"/>
</dbReference>
<dbReference type="HAMAP" id="MF_00815">
    <property type="entry name" value="ATP_synth_gamma_bact"/>
    <property type="match status" value="1"/>
</dbReference>
<dbReference type="InterPro" id="IPR035968">
    <property type="entry name" value="ATP_synth_F1_ATPase_gsu"/>
</dbReference>
<dbReference type="InterPro" id="IPR000131">
    <property type="entry name" value="ATP_synth_F1_gsu"/>
</dbReference>
<dbReference type="NCBIfam" id="TIGR01146">
    <property type="entry name" value="ATPsyn_F1gamma"/>
    <property type="match status" value="1"/>
</dbReference>
<dbReference type="NCBIfam" id="NF004144">
    <property type="entry name" value="PRK05621.1-1"/>
    <property type="match status" value="1"/>
</dbReference>
<dbReference type="PANTHER" id="PTHR11693">
    <property type="entry name" value="ATP SYNTHASE GAMMA CHAIN"/>
    <property type="match status" value="1"/>
</dbReference>
<dbReference type="PANTHER" id="PTHR11693:SF22">
    <property type="entry name" value="ATP SYNTHASE SUBUNIT GAMMA, MITOCHONDRIAL"/>
    <property type="match status" value="1"/>
</dbReference>
<dbReference type="Pfam" id="PF00231">
    <property type="entry name" value="ATP-synt"/>
    <property type="match status" value="1"/>
</dbReference>
<dbReference type="PRINTS" id="PR00126">
    <property type="entry name" value="ATPASEGAMMA"/>
</dbReference>
<dbReference type="SUPFAM" id="SSF52943">
    <property type="entry name" value="ATP synthase (F1-ATPase), gamma subunit"/>
    <property type="match status" value="1"/>
</dbReference>
<comment type="function">
    <text evidence="1">Produces ATP from ADP in the presence of a proton gradient across the membrane. The gamma chain is believed to be important in regulating ATPase activity and the flow of protons through the CF(0) complex.</text>
</comment>
<comment type="subunit">
    <text evidence="1">F-type ATPases have 2 components, CF(1) - the catalytic core - and CF(0) - the membrane proton channel. CF(1) has five subunits: alpha(3), beta(3), gamma(1), delta(1), epsilon(1). CF(0) has three main subunits: a, b and c.</text>
</comment>
<comment type="subcellular location">
    <subcellularLocation>
        <location evidence="1">Cell inner membrane</location>
        <topology evidence="1">Peripheral membrane protein</topology>
    </subcellularLocation>
</comment>
<comment type="similarity">
    <text evidence="1">Belongs to the ATPase gamma chain family.</text>
</comment>
<protein>
    <recommendedName>
        <fullName evidence="1">ATP synthase gamma chain</fullName>
    </recommendedName>
    <alternativeName>
        <fullName evidence="1">ATP synthase F1 sector gamma subunit</fullName>
    </alternativeName>
    <alternativeName>
        <fullName evidence="1">F-ATPase gamma subunit</fullName>
    </alternativeName>
</protein>